<gene>
    <name evidence="1" type="primary">xseA</name>
    <name type="ordered locus">Hore_06490</name>
</gene>
<organism>
    <name type="scientific">Halothermothrix orenii (strain H 168 / OCM 544 / DSM 9562)</name>
    <dbReference type="NCBI Taxonomy" id="373903"/>
    <lineage>
        <taxon>Bacteria</taxon>
        <taxon>Bacillati</taxon>
        <taxon>Bacillota</taxon>
        <taxon>Clostridia</taxon>
        <taxon>Halanaerobiales</taxon>
        <taxon>Halothermotrichaceae</taxon>
        <taxon>Halothermothrix</taxon>
    </lineage>
</organism>
<evidence type="ECO:0000255" key="1">
    <source>
        <dbReference type="HAMAP-Rule" id="MF_00378"/>
    </source>
</evidence>
<keyword id="KW-0963">Cytoplasm</keyword>
<keyword id="KW-0269">Exonuclease</keyword>
<keyword id="KW-0378">Hydrolase</keyword>
<keyword id="KW-0540">Nuclease</keyword>
<keyword id="KW-1185">Reference proteome</keyword>
<feature type="chain" id="PRO_1000200672" description="Exodeoxyribonuclease 7 large subunit">
    <location>
        <begin position="1"/>
        <end position="405"/>
    </location>
</feature>
<name>EX7L_HALOH</name>
<protein>
    <recommendedName>
        <fullName evidence="1">Exodeoxyribonuclease 7 large subunit</fullName>
        <ecNumber evidence="1">3.1.11.6</ecNumber>
    </recommendedName>
    <alternativeName>
        <fullName evidence="1">Exodeoxyribonuclease VII large subunit</fullName>
        <shortName evidence="1">Exonuclease VII large subunit</shortName>
    </alternativeName>
</protein>
<proteinExistence type="inferred from homology"/>
<dbReference type="EC" id="3.1.11.6" evidence="1"/>
<dbReference type="EMBL" id="CP001098">
    <property type="protein sequence ID" value="ACL69406.1"/>
    <property type="molecule type" value="Genomic_DNA"/>
</dbReference>
<dbReference type="RefSeq" id="WP_012635594.1">
    <property type="nucleotide sequence ID" value="NC_011899.1"/>
</dbReference>
<dbReference type="SMR" id="B8D2H9"/>
<dbReference type="STRING" id="373903.Hore_06490"/>
<dbReference type="KEGG" id="hor:Hore_06490"/>
<dbReference type="eggNOG" id="COG1570">
    <property type="taxonomic scope" value="Bacteria"/>
</dbReference>
<dbReference type="HOGENOM" id="CLU_023625_3_1_9"/>
<dbReference type="OrthoDB" id="9802795at2"/>
<dbReference type="Proteomes" id="UP000000719">
    <property type="component" value="Chromosome"/>
</dbReference>
<dbReference type="GO" id="GO:0005737">
    <property type="term" value="C:cytoplasm"/>
    <property type="evidence" value="ECO:0007669"/>
    <property type="project" value="UniProtKB-SubCell"/>
</dbReference>
<dbReference type="GO" id="GO:0009318">
    <property type="term" value="C:exodeoxyribonuclease VII complex"/>
    <property type="evidence" value="ECO:0007669"/>
    <property type="project" value="InterPro"/>
</dbReference>
<dbReference type="GO" id="GO:0008855">
    <property type="term" value="F:exodeoxyribonuclease VII activity"/>
    <property type="evidence" value="ECO:0007669"/>
    <property type="project" value="UniProtKB-UniRule"/>
</dbReference>
<dbReference type="GO" id="GO:0003676">
    <property type="term" value="F:nucleic acid binding"/>
    <property type="evidence" value="ECO:0007669"/>
    <property type="project" value="InterPro"/>
</dbReference>
<dbReference type="GO" id="GO:0006308">
    <property type="term" value="P:DNA catabolic process"/>
    <property type="evidence" value="ECO:0007669"/>
    <property type="project" value="UniProtKB-UniRule"/>
</dbReference>
<dbReference type="CDD" id="cd04489">
    <property type="entry name" value="ExoVII_LU_OBF"/>
    <property type="match status" value="1"/>
</dbReference>
<dbReference type="HAMAP" id="MF_00378">
    <property type="entry name" value="Exonuc_7_L"/>
    <property type="match status" value="1"/>
</dbReference>
<dbReference type="InterPro" id="IPR003753">
    <property type="entry name" value="Exonuc_VII_L"/>
</dbReference>
<dbReference type="InterPro" id="IPR020579">
    <property type="entry name" value="Exonuc_VII_lsu_C"/>
</dbReference>
<dbReference type="InterPro" id="IPR025824">
    <property type="entry name" value="OB-fold_nuc-bd_dom"/>
</dbReference>
<dbReference type="NCBIfam" id="TIGR00237">
    <property type="entry name" value="xseA"/>
    <property type="match status" value="1"/>
</dbReference>
<dbReference type="PANTHER" id="PTHR30008">
    <property type="entry name" value="EXODEOXYRIBONUCLEASE 7 LARGE SUBUNIT"/>
    <property type="match status" value="1"/>
</dbReference>
<dbReference type="PANTHER" id="PTHR30008:SF0">
    <property type="entry name" value="EXODEOXYRIBONUCLEASE 7 LARGE SUBUNIT"/>
    <property type="match status" value="1"/>
</dbReference>
<dbReference type="Pfam" id="PF02601">
    <property type="entry name" value="Exonuc_VII_L"/>
    <property type="match status" value="2"/>
</dbReference>
<dbReference type="Pfam" id="PF13742">
    <property type="entry name" value="tRNA_anti_2"/>
    <property type="match status" value="1"/>
</dbReference>
<sequence length="405" mass="45908">MESKIYTVSEVTGRITELLTSDSVLNDLWITGEISNFHHHNSGHMYFTIKDERSCIKSIMFRGYNRKLKFEPEDGLKVNAHGYVGVYKPRGDYQFYVDHLEPAGKGALYLAFEQLKEKLEKEGLFNEDHKKEIPLLPRKIGVVTSPTGAAIRDILSVVKRRFKNVSVLIVPSLVQGKKAAREIVEGIEYLNSRDDIDVIIVSRGGGSIEELWSFNEEVVARAIYNSRIPVISGVGHETDFTIADFVADLRAPTPSAAAELAISNRIELEKHLVNLYTRLYNSVSYQIKSYRDRLNSLSLKKVLTRPEELFIQKIQYVDELSRRLDWAMEGRLKDAREKFRVLSGKLDSLSPLKTIERGYSITLKGSEPINSITQVDIGDVIRSRLSDGIILSQVKRTMKEGEQDG</sequence>
<comment type="function">
    <text evidence="1">Bidirectionally degrades single-stranded DNA into large acid-insoluble oligonucleotides, which are then degraded further into small acid-soluble oligonucleotides.</text>
</comment>
<comment type="catalytic activity">
    <reaction evidence="1">
        <text>Exonucleolytic cleavage in either 5'- to 3'- or 3'- to 5'-direction to yield nucleoside 5'-phosphates.</text>
        <dbReference type="EC" id="3.1.11.6"/>
    </reaction>
</comment>
<comment type="subunit">
    <text evidence="1">Heterooligomer composed of large and small subunits.</text>
</comment>
<comment type="subcellular location">
    <subcellularLocation>
        <location evidence="1">Cytoplasm</location>
    </subcellularLocation>
</comment>
<comment type="similarity">
    <text evidence="1">Belongs to the XseA family.</text>
</comment>
<accession>B8D2H9</accession>
<reference key="1">
    <citation type="journal article" date="2009" name="PLoS ONE">
        <title>Genome analysis of the anaerobic thermohalophilic bacterium Halothermothrix orenii.</title>
        <authorList>
            <person name="Mavromatis K."/>
            <person name="Ivanova N."/>
            <person name="Anderson I."/>
            <person name="Lykidis A."/>
            <person name="Hooper S.D."/>
            <person name="Sun H."/>
            <person name="Kunin V."/>
            <person name="Lapidus A."/>
            <person name="Hugenholtz P."/>
            <person name="Patel B."/>
            <person name="Kyrpides N.C."/>
        </authorList>
    </citation>
    <scope>NUCLEOTIDE SEQUENCE [LARGE SCALE GENOMIC DNA]</scope>
    <source>
        <strain>H 168 / OCM 544 / DSM 9562</strain>
    </source>
</reference>